<name>RT24B_XENLA</name>
<proteinExistence type="evidence at transcript level"/>
<gene>
    <name type="primary">mrps24-b</name>
</gene>
<sequence length="170" mass="19373">MAAPVMSAFGRLQGLIRTERSLLTHVQSRCIQTTSVCLKNRAARVRVGKGDKPVTYEAAHPPHYIAHRKGWLSQHTGNLDGEGGAAERTIEDVFIRRFIFGTFHGCLANEIVIKRRANLLIICAIFIRKMPTQKFYFLIGYTETLLSFLYKCPVKLEVQTVEEKVIYKYL</sequence>
<comment type="subunit">
    <text evidence="1">Component of the mitochondrial ribosome small subunit (28S) which comprises a 12S rRNA and about 30 distinct proteins.</text>
</comment>
<comment type="subcellular location">
    <subcellularLocation>
        <location evidence="1">Mitochondrion</location>
    </subcellularLocation>
</comment>
<comment type="similarity">
    <text evidence="3">Belongs to the universal ribosomal protein uS3 family.</text>
</comment>
<evidence type="ECO:0000250" key="1">
    <source>
        <dbReference type="UniProtKB" id="Q2M2T7"/>
    </source>
</evidence>
<evidence type="ECO:0000255" key="2"/>
<evidence type="ECO:0000305" key="3"/>
<dbReference type="EMBL" id="BC106281">
    <property type="protein sequence ID" value="AAI06282.1"/>
    <property type="molecule type" value="mRNA"/>
</dbReference>
<dbReference type="SMR" id="Q3B8K3"/>
<dbReference type="AGR" id="Xenbase:XB-GENE-960281"/>
<dbReference type="Xenbase" id="XB-GENE-960281">
    <property type="gene designation" value="mrps24.S"/>
</dbReference>
<dbReference type="Proteomes" id="UP000186698">
    <property type="component" value="Unplaced"/>
</dbReference>
<dbReference type="GO" id="GO:0005763">
    <property type="term" value="C:mitochondrial small ribosomal subunit"/>
    <property type="evidence" value="ECO:0000250"/>
    <property type="project" value="UniProtKB"/>
</dbReference>
<dbReference type="GO" id="GO:0003735">
    <property type="term" value="F:structural constituent of ribosome"/>
    <property type="evidence" value="ECO:0000250"/>
    <property type="project" value="UniProtKB"/>
</dbReference>
<dbReference type="GO" id="GO:0032543">
    <property type="term" value="P:mitochondrial translation"/>
    <property type="evidence" value="ECO:0000250"/>
    <property type="project" value="UniProtKB"/>
</dbReference>
<dbReference type="InterPro" id="IPR026146">
    <property type="entry name" value="Ribosomal_uS3m"/>
</dbReference>
<dbReference type="PANTHER" id="PTHR21244">
    <property type="entry name" value="MITOCHONDRIAL 28S RIBOSOMAL PROTEIN S24"/>
    <property type="match status" value="1"/>
</dbReference>
<dbReference type="PANTHER" id="PTHR21244:SF1">
    <property type="entry name" value="SMALL RIBOSOMAL SUBUNIT PROTEIN US3M"/>
    <property type="match status" value="1"/>
</dbReference>
<dbReference type="Pfam" id="PF14955">
    <property type="entry name" value="MRP-S24"/>
    <property type="match status" value="1"/>
</dbReference>
<organism>
    <name type="scientific">Xenopus laevis</name>
    <name type="common">African clawed frog</name>
    <dbReference type="NCBI Taxonomy" id="8355"/>
    <lineage>
        <taxon>Eukaryota</taxon>
        <taxon>Metazoa</taxon>
        <taxon>Chordata</taxon>
        <taxon>Craniata</taxon>
        <taxon>Vertebrata</taxon>
        <taxon>Euteleostomi</taxon>
        <taxon>Amphibia</taxon>
        <taxon>Batrachia</taxon>
        <taxon>Anura</taxon>
        <taxon>Pipoidea</taxon>
        <taxon>Pipidae</taxon>
        <taxon>Xenopodinae</taxon>
        <taxon>Xenopus</taxon>
        <taxon>Xenopus</taxon>
    </lineage>
</organism>
<accession>Q3B8K3</accession>
<feature type="transit peptide" description="Mitochondrion" evidence="2">
    <location>
        <begin position="1"/>
        <end position="30"/>
    </location>
</feature>
<feature type="chain" id="PRO_0000273070" description="Small ribosomal subunit protein uS3mB">
    <location>
        <begin position="31"/>
        <end position="170"/>
    </location>
</feature>
<protein>
    <recommendedName>
        <fullName evidence="3">Small ribosomal subunit protein uS3mB</fullName>
    </recommendedName>
    <alternativeName>
        <fullName>28S ribosomal protein S24-B, mitochondrial</fullName>
        <shortName>MRP-S24-B</shortName>
        <shortName>S24mt-B</shortName>
    </alternativeName>
</protein>
<keyword id="KW-0496">Mitochondrion</keyword>
<keyword id="KW-1185">Reference proteome</keyword>
<keyword id="KW-0687">Ribonucleoprotein</keyword>
<keyword id="KW-0689">Ribosomal protein</keyword>
<keyword id="KW-0809">Transit peptide</keyword>
<reference key="1">
    <citation type="submission" date="2005-10" db="EMBL/GenBank/DDBJ databases">
        <authorList>
            <consortium name="NIH - Xenopus Gene Collection (XGC) project"/>
        </authorList>
    </citation>
    <scope>NUCLEOTIDE SEQUENCE [LARGE SCALE MRNA]</scope>
    <source>
        <tissue>Testis</tissue>
    </source>
</reference>